<feature type="chain" id="PRO_0000329542" description="Polyribonucleotide nucleotidyltransferase">
    <location>
        <begin position="1"/>
        <end position="720"/>
    </location>
</feature>
<feature type="domain" description="KH" evidence="1">
    <location>
        <begin position="554"/>
        <end position="613"/>
    </location>
</feature>
<feature type="domain" description="S1 motif" evidence="1">
    <location>
        <begin position="623"/>
        <end position="691"/>
    </location>
</feature>
<feature type="region of interest" description="Disordered" evidence="2">
    <location>
        <begin position="699"/>
        <end position="720"/>
    </location>
</feature>
<feature type="compositionally biased region" description="Basic and acidic residues" evidence="2">
    <location>
        <begin position="701"/>
        <end position="720"/>
    </location>
</feature>
<feature type="binding site" evidence="1">
    <location>
        <position position="487"/>
    </location>
    <ligand>
        <name>Mg(2+)</name>
        <dbReference type="ChEBI" id="CHEBI:18420"/>
    </ligand>
</feature>
<feature type="binding site" evidence="1">
    <location>
        <position position="493"/>
    </location>
    <ligand>
        <name>Mg(2+)</name>
        <dbReference type="ChEBI" id="CHEBI:18420"/>
    </ligand>
</feature>
<comment type="function">
    <text evidence="1">Involved in mRNA degradation. Catalyzes the phosphorolysis of single-stranded polyribonucleotides processively in the 3'- to 5'-direction.</text>
</comment>
<comment type="catalytic activity">
    <reaction evidence="1">
        <text>RNA(n+1) + phosphate = RNA(n) + a ribonucleoside 5'-diphosphate</text>
        <dbReference type="Rhea" id="RHEA:22096"/>
        <dbReference type="Rhea" id="RHEA-COMP:14527"/>
        <dbReference type="Rhea" id="RHEA-COMP:17342"/>
        <dbReference type="ChEBI" id="CHEBI:43474"/>
        <dbReference type="ChEBI" id="CHEBI:57930"/>
        <dbReference type="ChEBI" id="CHEBI:140395"/>
        <dbReference type="EC" id="2.7.7.8"/>
    </reaction>
</comment>
<comment type="cofactor">
    <cofactor evidence="1">
        <name>Mg(2+)</name>
        <dbReference type="ChEBI" id="CHEBI:18420"/>
    </cofactor>
</comment>
<comment type="subcellular location">
    <subcellularLocation>
        <location evidence="1">Cytoplasm</location>
    </subcellularLocation>
</comment>
<comment type="similarity">
    <text evidence="1">Belongs to the polyribonucleotide nucleotidyltransferase family.</text>
</comment>
<proteinExistence type="inferred from homology"/>
<gene>
    <name evidence="1" type="primary">pnp</name>
    <name type="ordered locus">bll0779</name>
</gene>
<keyword id="KW-0963">Cytoplasm</keyword>
<keyword id="KW-0460">Magnesium</keyword>
<keyword id="KW-0479">Metal-binding</keyword>
<keyword id="KW-0548">Nucleotidyltransferase</keyword>
<keyword id="KW-1185">Reference proteome</keyword>
<keyword id="KW-0694">RNA-binding</keyword>
<keyword id="KW-0808">Transferase</keyword>
<evidence type="ECO:0000255" key="1">
    <source>
        <dbReference type="HAMAP-Rule" id="MF_01595"/>
    </source>
</evidence>
<evidence type="ECO:0000256" key="2">
    <source>
        <dbReference type="SAM" id="MobiDB-lite"/>
    </source>
</evidence>
<sequence length="720" mass="78299">MFNKHSVEIDWGGRPLKLETGKIARQADGAVVATYGETVVLATVVAAKAPREGVDFLPLTVDYQEKTYAAGRIPGGYFKREGRPTEKETLVSRLIDRPIRPLFVDGWRNETQVIATVLSHDMENDPDIVALVASSAALTLSGAPFKGPIGAARVGFVNDEYVLNPTLDEMVDTQLDLVVAGTADAVLMVESEAKELNEDIMLGAVMFGHRHFQPVINAIIELAEKAAKEPREVTVIDNAALEKEMLGLVEQELRAAYAIPVKQDRYAAVGKVKEKVIAHYFPEGQEPKYDKLRIAGVFKELEAKIVRWNILDTGKRIDGRDSKTVRNIIAEVGVLPRAHGSALFTRGETQAMVVTTLGTGEDEQYIDALSGTYKETFLLHYNFPPYSVGETGRLGGTKRREIGHGKLAWRAIHPVLPPHHEFPYTIRVVSEITESNGSSSMASVCGASLALMDAGVPLKRPTAGIAMGLILEDKRFAVLSDILGDEDHLGDMDFKVAGTESGITSLQMDIKIEGITEEIMKVALGQAKDGRIHILGEMAKALTNARAELGEYAPRIETFKIPTDKIREVIGTGGKVIREIVEKTGAKVNIEDDGTVKVASSDGEAMKAAIKWIKSIASEPEVGQIYDGTVVKVMEFGAFVNFFGSKDGLVHISQLASARVQKTSDVVKEGDKVKVKLLGFDDRGKTRLSMKVVDQTTGEDLEAKDKVAEGEKAPREAAGE</sequence>
<protein>
    <recommendedName>
        <fullName evidence="1">Polyribonucleotide nucleotidyltransferase</fullName>
        <ecNumber evidence="1">2.7.7.8</ecNumber>
    </recommendedName>
    <alternativeName>
        <fullName evidence="1">Polynucleotide phosphorylase</fullName>
        <shortName evidence="1">PNPase</shortName>
    </alternativeName>
</protein>
<dbReference type="EC" id="2.7.7.8" evidence="1"/>
<dbReference type="EMBL" id="BA000040">
    <property type="protein sequence ID" value="BAC46044.1"/>
    <property type="molecule type" value="Genomic_DNA"/>
</dbReference>
<dbReference type="RefSeq" id="NP_767419.1">
    <property type="nucleotide sequence ID" value="NC_004463.1"/>
</dbReference>
<dbReference type="RefSeq" id="WP_011083601.1">
    <property type="nucleotide sequence ID" value="NC_004463.1"/>
</dbReference>
<dbReference type="SMR" id="Q89WB3"/>
<dbReference type="FunCoup" id="Q89WB3">
    <property type="interactions" value="674"/>
</dbReference>
<dbReference type="STRING" id="224911.AAV28_00745"/>
<dbReference type="EnsemblBacteria" id="BAC46044">
    <property type="protein sequence ID" value="BAC46044"/>
    <property type="gene ID" value="BAC46044"/>
</dbReference>
<dbReference type="GeneID" id="46488055"/>
<dbReference type="KEGG" id="bja:bll0779"/>
<dbReference type="PATRIC" id="fig|224911.44.peg.153"/>
<dbReference type="eggNOG" id="COG1185">
    <property type="taxonomic scope" value="Bacteria"/>
</dbReference>
<dbReference type="HOGENOM" id="CLU_004217_2_2_5"/>
<dbReference type="InParanoid" id="Q89WB3"/>
<dbReference type="OrthoDB" id="9804305at2"/>
<dbReference type="PhylomeDB" id="Q89WB3"/>
<dbReference type="Proteomes" id="UP000002526">
    <property type="component" value="Chromosome"/>
</dbReference>
<dbReference type="GO" id="GO:0005829">
    <property type="term" value="C:cytosol"/>
    <property type="evidence" value="ECO:0000318"/>
    <property type="project" value="GO_Central"/>
</dbReference>
<dbReference type="GO" id="GO:0000175">
    <property type="term" value="F:3'-5'-RNA exonuclease activity"/>
    <property type="evidence" value="ECO:0000318"/>
    <property type="project" value="GO_Central"/>
</dbReference>
<dbReference type="GO" id="GO:0000287">
    <property type="term" value="F:magnesium ion binding"/>
    <property type="evidence" value="ECO:0007669"/>
    <property type="project" value="UniProtKB-UniRule"/>
</dbReference>
<dbReference type="GO" id="GO:0004654">
    <property type="term" value="F:polyribonucleotide nucleotidyltransferase activity"/>
    <property type="evidence" value="ECO:0000318"/>
    <property type="project" value="GO_Central"/>
</dbReference>
<dbReference type="GO" id="GO:0003723">
    <property type="term" value="F:RNA binding"/>
    <property type="evidence" value="ECO:0007669"/>
    <property type="project" value="UniProtKB-UniRule"/>
</dbReference>
<dbReference type="GO" id="GO:0006402">
    <property type="term" value="P:mRNA catabolic process"/>
    <property type="evidence" value="ECO:0007669"/>
    <property type="project" value="UniProtKB-UniRule"/>
</dbReference>
<dbReference type="GO" id="GO:0006401">
    <property type="term" value="P:RNA catabolic process"/>
    <property type="evidence" value="ECO:0000318"/>
    <property type="project" value="GO_Central"/>
</dbReference>
<dbReference type="GO" id="GO:0006396">
    <property type="term" value="P:RNA processing"/>
    <property type="evidence" value="ECO:0007669"/>
    <property type="project" value="InterPro"/>
</dbReference>
<dbReference type="CDD" id="cd02393">
    <property type="entry name" value="KH-I_PNPase"/>
    <property type="match status" value="1"/>
</dbReference>
<dbReference type="CDD" id="cd11363">
    <property type="entry name" value="RNase_PH_PNPase_1"/>
    <property type="match status" value="1"/>
</dbReference>
<dbReference type="CDD" id="cd11364">
    <property type="entry name" value="RNase_PH_PNPase_2"/>
    <property type="match status" value="1"/>
</dbReference>
<dbReference type="CDD" id="cd04472">
    <property type="entry name" value="S1_PNPase"/>
    <property type="match status" value="1"/>
</dbReference>
<dbReference type="FunFam" id="2.40.50.140:FF:000107">
    <property type="entry name" value="Polyribonucleotide nucleotidyltransferase"/>
    <property type="match status" value="1"/>
</dbReference>
<dbReference type="FunFam" id="3.30.1370.10:FF:000001">
    <property type="entry name" value="Polyribonucleotide nucleotidyltransferase"/>
    <property type="match status" value="1"/>
</dbReference>
<dbReference type="FunFam" id="3.30.230.70:FF:000001">
    <property type="entry name" value="Polyribonucleotide nucleotidyltransferase"/>
    <property type="match status" value="1"/>
</dbReference>
<dbReference type="FunFam" id="3.30.230.70:FF:000002">
    <property type="entry name" value="Polyribonucleotide nucleotidyltransferase"/>
    <property type="match status" value="1"/>
</dbReference>
<dbReference type="Gene3D" id="3.30.230.70">
    <property type="entry name" value="GHMP Kinase, N-terminal domain"/>
    <property type="match status" value="2"/>
</dbReference>
<dbReference type="Gene3D" id="3.30.1370.10">
    <property type="entry name" value="K Homology domain, type 1"/>
    <property type="match status" value="1"/>
</dbReference>
<dbReference type="Gene3D" id="2.40.50.140">
    <property type="entry name" value="Nucleic acid-binding proteins"/>
    <property type="match status" value="1"/>
</dbReference>
<dbReference type="HAMAP" id="MF_01595">
    <property type="entry name" value="PNPase"/>
    <property type="match status" value="1"/>
</dbReference>
<dbReference type="InterPro" id="IPR001247">
    <property type="entry name" value="ExoRNase_PH_dom1"/>
</dbReference>
<dbReference type="InterPro" id="IPR015847">
    <property type="entry name" value="ExoRNase_PH_dom2"/>
</dbReference>
<dbReference type="InterPro" id="IPR036345">
    <property type="entry name" value="ExoRNase_PH_dom2_sf"/>
</dbReference>
<dbReference type="InterPro" id="IPR004087">
    <property type="entry name" value="KH_dom"/>
</dbReference>
<dbReference type="InterPro" id="IPR004088">
    <property type="entry name" value="KH_dom_type_1"/>
</dbReference>
<dbReference type="InterPro" id="IPR036612">
    <property type="entry name" value="KH_dom_type_1_sf"/>
</dbReference>
<dbReference type="InterPro" id="IPR012340">
    <property type="entry name" value="NA-bd_OB-fold"/>
</dbReference>
<dbReference type="InterPro" id="IPR012162">
    <property type="entry name" value="PNPase"/>
</dbReference>
<dbReference type="InterPro" id="IPR027408">
    <property type="entry name" value="PNPase/RNase_PH_dom_sf"/>
</dbReference>
<dbReference type="InterPro" id="IPR015848">
    <property type="entry name" value="PNPase_PH_RNA-bd_bac/org-type"/>
</dbReference>
<dbReference type="InterPro" id="IPR036456">
    <property type="entry name" value="PNPase_PH_RNA-bd_sf"/>
</dbReference>
<dbReference type="InterPro" id="IPR020568">
    <property type="entry name" value="Ribosomal_Su5_D2-typ_SF"/>
</dbReference>
<dbReference type="InterPro" id="IPR003029">
    <property type="entry name" value="S1_domain"/>
</dbReference>
<dbReference type="NCBIfam" id="TIGR03591">
    <property type="entry name" value="polynuc_phos"/>
    <property type="match status" value="1"/>
</dbReference>
<dbReference type="NCBIfam" id="NF008805">
    <property type="entry name" value="PRK11824.1"/>
    <property type="match status" value="1"/>
</dbReference>
<dbReference type="PANTHER" id="PTHR11252">
    <property type="entry name" value="POLYRIBONUCLEOTIDE NUCLEOTIDYLTRANSFERASE"/>
    <property type="match status" value="1"/>
</dbReference>
<dbReference type="PANTHER" id="PTHR11252:SF0">
    <property type="entry name" value="POLYRIBONUCLEOTIDE NUCLEOTIDYLTRANSFERASE 1, MITOCHONDRIAL"/>
    <property type="match status" value="1"/>
</dbReference>
<dbReference type="Pfam" id="PF00013">
    <property type="entry name" value="KH_1"/>
    <property type="match status" value="1"/>
</dbReference>
<dbReference type="Pfam" id="PF03726">
    <property type="entry name" value="PNPase"/>
    <property type="match status" value="1"/>
</dbReference>
<dbReference type="Pfam" id="PF01138">
    <property type="entry name" value="RNase_PH"/>
    <property type="match status" value="2"/>
</dbReference>
<dbReference type="Pfam" id="PF03725">
    <property type="entry name" value="RNase_PH_C"/>
    <property type="match status" value="2"/>
</dbReference>
<dbReference type="Pfam" id="PF00575">
    <property type="entry name" value="S1"/>
    <property type="match status" value="1"/>
</dbReference>
<dbReference type="PIRSF" id="PIRSF005499">
    <property type="entry name" value="PNPase"/>
    <property type="match status" value="1"/>
</dbReference>
<dbReference type="SMART" id="SM00322">
    <property type="entry name" value="KH"/>
    <property type="match status" value="1"/>
</dbReference>
<dbReference type="SMART" id="SM00316">
    <property type="entry name" value="S1"/>
    <property type="match status" value="1"/>
</dbReference>
<dbReference type="SUPFAM" id="SSF54791">
    <property type="entry name" value="Eukaryotic type KH-domain (KH-domain type I)"/>
    <property type="match status" value="1"/>
</dbReference>
<dbReference type="SUPFAM" id="SSF50249">
    <property type="entry name" value="Nucleic acid-binding proteins"/>
    <property type="match status" value="1"/>
</dbReference>
<dbReference type="SUPFAM" id="SSF46915">
    <property type="entry name" value="Polynucleotide phosphorylase/guanosine pentaphosphate synthase (PNPase/GPSI), domain 3"/>
    <property type="match status" value="1"/>
</dbReference>
<dbReference type="SUPFAM" id="SSF55666">
    <property type="entry name" value="Ribonuclease PH domain 2-like"/>
    <property type="match status" value="2"/>
</dbReference>
<dbReference type="SUPFAM" id="SSF54211">
    <property type="entry name" value="Ribosomal protein S5 domain 2-like"/>
    <property type="match status" value="2"/>
</dbReference>
<dbReference type="PROSITE" id="PS50084">
    <property type="entry name" value="KH_TYPE_1"/>
    <property type="match status" value="1"/>
</dbReference>
<dbReference type="PROSITE" id="PS50126">
    <property type="entry name" value="S1"/>
    <property type="match status" value="1"/>
</dbReference>
<name>PNP_BRADU</name>
<organism>
    <name type="scientific">Bradyrhizobium diazoefficiens (strain JCM 10833 / BCRC 13528 / IAM 13628 / NBRC 14792 / USDA 110)</name>
    <dbReference type="NCBI Taxonomy" id="224911"/>
    <lineage>
        <taxon>Bacteria</taxon>
        <taxon>Pseudomonadati</taxon>
        <taxon>Pseudomonadota</taxon>
        <taxon>Alphaproteobacteria</taxon>
        <taxon>Hyphomicrobiales</taxon>
        <taxon>Nitrobacteraceae</taxon>
        <taxon>Bradyrhizobium</taxon>
    </lineage>
</organism>
<reference key="1">
    <citation type="journal article" date="2002" name="DNA Res.">
        <title>Complete genomic sequence of nitrogen-fixing symbiotic bacterium Bradyrhizobium japonicum USDA110.</title>
        <authorList>
            <person name="Kaneko T."/>
            <person name="Nakamura Y."/>
            <person name="Sato S."/>
            <person name="Minamisawa K."/>
            <person name="Uchiumi T."/>
            <person name="Sasamoto S."/>
            <person name="Watanabe A."/>
            <person name="Idesawa K."/>
            <person name="Iriguchi M."/>
            <person name="Kawashima K."/>
            <person name="Kohara M."/>
            <person name="Matsumoto M."/>
            <person name="Shimpo S."/>
            <person name="Tsuruoka H."/>
            <person name="Wada T."/>
            <person name="Yamada M."/>
            <person name="Tabata S."/>
        </authorList>
    </citation>
    <scope>NUCLEOTIDE SEQUENCE [LARGE SCALE GENOMIC DNA]</scope>
    <source>
        <strain>JCM 10833 / BCRC 13528 / IAM 13628 / NBRC 14792 / USDA 110</strain>
    </source>
</reference>
<accession>Q89WB3</accession>